<feature type="chain" id="PRO_1000101286" description="Glycine--tRNA ligase beta subunit">
    <location>
        <begin position="1"/>
        <end position="706"/>
    </location>
</feature>
<evidence type="ECO:0000255" key="1">
    <source>
        <dbReference type="HAMAP-Rule" id="MF_00255"/>
    </source>
</evidence>
<dbReference type="EC" id="6.1.1.14" evidence="1"/>
<dbReference type="EMBL" id="CP000158">
    <property type="protein sequence ID" value="ABI76167.1"/>
    <property type="molecule type" value="Genomic_DNA"/>
</dbReference>
<dbReference type="RefSeq" id="WP_011645714.1">
    <property type="nucleotide sequence ID" value="NC_008358.1"/>
</dbReference>
<dbReference type="SMR" id="Q0C4C9"/>
<dbReference type="STRING" id="228405.HNE_0685"/>
<dbReference type="KEGG" id="hne:HNE_0685"/>
<dbReference type="eggNOG" id="COG0751">
    <property type="taxonomic scope" value="Bacteria"/>
</dbReference>
<dbReference type="HOGENOM" id="CLU_007220_2_1_5"/>
<dbReference type="Proteomes" id="UP000001959">
    <property type="component" value="Chromosome"/>
</dbReference>
<dbReference type="GO" id="GO:0005829">
    <property type="term" value="C:cytosol"/>
    <property type="evidence" value="ECO:0007669"/>
    <property type="project" value="TreeGrafter"/>
</dbReference>
<dbReference type="GO" id="GO:0004814">
    <property type="term" value="F:arginine-tRNA ligase activity"/>
    <property type="evidence" value="ECO:0007669"/>
    <property type="project" value="InterPro"/>
</dbReference>
<dbReference type="GO" id="GO:0005524">
    <property type="term" value="F:ATP binding"/>
    <property type="evidence" value="ECO:0007669"/>
    <property type="project" value="UniProtKB-UniRule"/>
</dbReference>
<dbReference type="GO" id="GO:0004820">
    <property type="term" value="F:glycine-tRNA ligase activity"/>
    <property type="evidence" value="ECO:0007669"/>
    <property type="project" value="UniProtKB-UniRule"/>
</dbReference>
<dbReference type="GO" id="GO:0006420">
    <property type="term" value="P:arginyl-tRNA aminoacylation"/>
    <property type="evidence" value="ECO:0007669"/>
    <property type="project" value="InterPro"/>
</dbReference>
<dbReference type="GO" id="GO:0006426">
    <property type="term" value="P:glycyl-tRNA aminoacylation"/>
    <property type="evidence" value="ECO:0007669"/>
    <property type="project" value="UniProtKB-UniRule"/>
</dbReference>
<dbReference type="HAMAP" id="MF_00255">
    <property type="entry name" value="Gly_tRNA_synth_beta"/>
    <property type="match status" value="1"/>
</dbReference>
<dbReference type="InterPro" id="IPR008909">
    <property type="entry name" value="DALR_anticod-bd"/>
</dbReference>
<dbReference type="InterPro" id="IPR015944">
    <property type="entry name" value="Gly-tRNA-synth_bsu"/>
</dbReference>
<dbReference type="InterPro" id="IPR006194">
    <property type="entry name" value="Gly-tRNA-synth_heterodimer"/>
</dbReference>
<dbReference type="NCBIfam" id="TIGR00211">
    <property type="entry name" value="glyS"/>
    <property type="match status" value="1"/>
</dbReference>
<dbReference type="PANTHER" id="PTHR30075:SF2">
    <property type="entry name" value="GLYCINE--TRNA LIGASE, CHLOROPLASTIC_MITOCHONDRIAL 2"/>
    <property type="match status" value="1"/>
</dbReference>
<dbReference type="PANTHER" id="PTHR30075">
    <property type="entry name" value="GLYCYL-TRNA SYNTHETASE"/>
    <property type="match status" value="1"/>
</dbReference>
<dbReference type="Pfam" id="PF05746">
    <property type="entry name" value="DALR_1"/>
    <property type="match status" value="1"/>
</dbReference>
<dbReference type="Pfam" id="PF02092">
    <property type="entry name" value="tRNA_synt_2f"/>
    <property type="match status" value="1"/>
</dbReference>
<dbReference type="PRINTS" id="PR01045">
    <property type="entry name" value="TRNASYNTHGB"/>
</dbReference>
<dbReference type="SUPFAM" id="SSF109604">
    <property type="entry name" value="HD-domain/PDEase-like"/>
    <property type="match status" value="1"/>
</dbReference>
<dbReference type="PROSITE" id="PS50861">
    <property type="entry name" value="AA_TRNA_LIGASE_II_GLYAB"/>
    <property type="match status" value="1"/>
</dbReference>
<accession>Q0C4C9</accession>
<comment type="catalytic activity">
    <reaction evidence="1">
        <text>tRNA(Gly) + glycine + ATP = glycyl-tRNA(Gly) + AMP + diphosphate</text>
        <dbReference type="Rhea" id="RHEA:16013"/>
        <dbReference type="Rhea" id="RHEA-COMP:9664"/>
        <dbReference type="Rhea" id="RHEA-COMP:9683"/>
        <dbReference type="ChEBI" id="CHEBI:30616"/>
        <dbReference type="ChEBI" id="CHEBI:33019"/>
        <dbReference type="ChEBI" id="CHEBI:57305"/>
        <dbReference type="ChEBI" id="CHEBI:78442"/>
        <dbReference type="ChEBI" id="CHEBI:78522"/>
        <dbReference type="ChEBI" id="CHEBI:456215"/>
        <dbReference type="EC" id="6.1.1.14"/>
    </reaction>
</comment>
<comment type="subunit">
    <text evidence="1">Tetramer of two alpha and two beta subunits.</text>
</comment>
<comment type="subcellular location">
    <subcellularLocation>
        <location evidence="1">Cytoplasm</location>
    </subcellularLocation>
</comment>
<comment type="similarity">
    <text evidence="1">Belongs to the class-II aminoacyl-tRNA synthetase family.</text>
</comment>
<proteinExistence type="inferred from homology"/>
<sequence>MADLLIELFSEEIPARMQAKAEADLLAALTGKLKEAGLAWKTAFAVSGPRRLTAVVEGLDARSADVREEKKGPKVGAPEQAIAGFLRGAGLTDISEASVVSDPKKGDFYVAYSTVPGRDAKDVIAEAVPAIIRDFHWPKSMRWGTGELRWVRPLQRIVCVLDGAVVPFEVGGITSGNETEGHRVHGRGPYTVTGWADYKSQLEGQGHVVLSRDDRRAAILGGIEKACAKAGLQWIEDKGLLEEVTGLAEWPVVVLGQMDPDFLDLPPEVITLSMRTHQKYFAATHAKTGKLAPNFILVANIAATDGGAKIAEGNARVLSARLSDARFFWEKDKATPLEVMGEKLKTIAFKEELGSLGDKVERVAALARELAPAVGADPGLAERAARLAKADLVSEMVGEFPELQGVMGRYYALAVGEDARVADAIRDHYKPQGPSDSVPTDPVSIAVALADKLDTLVGFWAIDEKPTGSKDPFALRRAALGVVRINLENGVRLKLSNAILKAPLAVRPVVKGGQSDSVRSAASKAIDALIDPTLLSFFADRLKQVLRDQGKRHDLIDAVFALGEDDLVLIVKRVEALAAFLATEDGATLLAGYRRAANILKAEEKKGALPDGLSVDPALIAKGPAAEQALWASLNETTAALEAPLKTEDFAGAMTALAGLRAPVDAFFEDVLVNDSDAKVRENRLALLIAVRGALHKVADFSRIEG</sequence>
<protein>
    <recommendedName>
        <fullName evidence="1">Glycine--tRNA ligase beta subunit</fullName>
        <ecNumber evidence="1">6.1.1.14</ecNumber>
    </recommendedName>
    <alternativeName>
        <fullName evidence="1">Glycyl-tRNA synthetase beta subunit</fullName>
        <shortName evidence="1">GlyRS</shortName>
    </alternativeName>
</protein>
<organism>
    <name type="scientific">Hyphomonas neptunium (strain ATCC 15444)</name>
    <dbReference type="NCBI Taxonomy" id="228405"/>
    <lineage>
        <taxon>Bacteria</taxon>
        <taxon>Pseudomonadati</taxon>
        <taxon>Pseudomonadota</taxon>
        <taxon>Alphaproteobacteria</taxon>
        <taxon>Hyphomonadales</taxon>
        <taxon>Hyphomonadaceae</taxon>
        <taxon>Hyphomonas</taxon>
    </lineage>
</organism>
<keyword id="KW-0030">Aminoacyl-tRNA synthetase</keyword>
<keyword id="KW-0067">ATP-binding</keyword>
<keyword id="KW-0963">Cytoplasm</keyword>
<keyword id="KW-0436">Ligase</keyword>
<keyword id="KW-0547">Nucleotide-binding</keyword>
<keyword id="KW-0648">Protein biosynthesis</keyword>
<keyword id="KW-1185">Reference proteome</keyword>
<gene>
    <name evidence="1" type="primary">glyS</name>
    <name type="ordered locus">HNE_0685</name>
</gene>
<reference key="1">
    <citation type="journal article" date="2006" name="J. Bacteriol.">
        <title>Comparative genomic evidence for a close relationship between the dimorphic prosthecate bacteria Hyphomonas neptunium and Caulobacter crescentus.</title>
        <authorList>
            <person name="Badger J.H."/>
            <person name="Hoover T.R."/>
            <person name="Brun Y.V."/>
            <person name="Weiner R.M."/>
            <person name="Laub M.T."/>
            <person name="Alexandre G."/>
            <person name="Mrazek J."/>
            <person name="Ren Q."/>
            <person name="Paulsen I.T."/>
            <person name="Nelson K.E."/>
            <person name="Khouri H.M."/>
            <person name="Radune D."/>
            <person name="Sosa J."/>
            <person name="Dodson R.J."/>
            <person name="Sullivan S.A."/>
            <person name="Rosovitz M.J."/>
            <person name="Madupu R."/>
            <person name="Brinkac L.M."/>
            <person name="Durkin A.S."/>
            <person name="Daugherty S.C."/>
            <person name="Kothari S.P."/>
            <person name="Giglio M.G."/>
            <person name="Zhou L."/>
            <person name="Haft D.H."/>
            <person name="Selengut J.D."/>
            <person name="Davidsen T.M."/>
            <person name="Yang Q."/>
            <person name="Zafar N."/>
            <person name="Ward N.L."/>
        </authorList>
    </citation>
    <scope>NUCLEOTIDE SEQUENCE [LARGE SCALE GENOMIC DNA]</scope>
    <source>
        <strain>ATCC 15444</strain>
    </source>
</reference>
<name>SYGB_HYPNA</name>